<accession>P44204</accession>
<dbReference type="EMBL" id="L42023">
    <property type="protein sequence ID" value="AAC23113.1"/>
    <property type="molecule type" value="Genomic_DNA"/>
</dbReference>
<dbReference type="PIR" id="G64030">
    <property type="entry name" value="G64030"/>
</dbReference>
<dbReference type="SMR" id="P44204"/>
<dbReference type="STRING" id="71421.HI_1458"/>
<dbReference type="EnsemblBacteria" id="AAC23113">
    <property type="protein sequence ID" value="AAC23113"/>
    <property type="gene ID" value="HI_1458"/>
</dbReference>
<dbReference type="KEGG" id="hin:HI_1458"/>
<dbReference type="eggNOG" id="COG1476">
    <property type="taxonomic scope" value="Bacteria"/>
</dbReference>
<dbReference type="HOGENOM" id="CLU_2584822_0_0_6"/>
<dbReference type="Proteomes" id="UP000000579">
    <property type="component" value="Chromosome"/>
</dbReference>
<sequence length="80" mass="9400">MQIAQIFNMNLSELVDENRGIIFLLNENGNNTSTNYYGNNDSLIIEIEKLKLTLFHKNELLEQKEKELETLRKMISLLEK</sequence>
<name>Y1458_HAEIN</name>
<gene>
    <name type="ordered locus">HI_1458</name>
</gene>
<keyword id="KW-1185">Reference proteome</keyword>
<proteinExistence type="predicted"/>
<reference key="1">
    <citation type="journal article" date="1995" name="Science">
        <title>Whole-genome random sequencing and assembly of Haemophilus influenzae Rd.</title>
        <authorList>
            <person name="Fleischmann R.D."/>
            <person name="Adams M.D."/>
            <person name="White O."/>
            <person name="Clayton R.A."/>
            <person name="Kirkness E.F."/>
            <person name="Kerlavage A.R."/>
            <person name="Bult C.J."/>
            <person name="Tomb J.-F."/>
            <person name="Dougherty B.A."/>
            <person name="Merrick J.M."/>
            <person name="McKenney K."/>
            <person name="Sutton G.G."/>
            <person name="FitzHugh W."/>
            <person name="Fields C.A."/>
            <person name="Gocayne J.D."/>
            <person name="Scott J.D."/>
            <person name="Shirley R."/>
            <person name="Liu L.-I."/>
            <person name="Glodek A."/>
            <person name="Kelley J.M."/>
            <person name="Weidman J.F."/>
            <person name="Phillips C.A."/>
            <person name="Spriggs T."/>
            <person name="Hedblom E."/>
            <person name="Cotton M.D."/>
            <person name="Utterback T.R."/>
            <person name="Hanna M.C."/>
            <person name="Nguyen D.T."/>
            <person name="Saudek D.M."/>
            <person name="Brandon R.C."/>
            <person name="Fine L.D."/>
            <person name="Fritchman J.L."/>
            <person name="Fuhrmann J.L."/>
            <person name="Geoghagen N.S.M."/>
            <person name="Gnehm C.L."/>
            <person name="McDonald L.A."/>
            <person name="Small K.V."/>
            <person name="Fraser C.M."/>
            <person name="Smith H.O."/>
            <person name="Venter J.C."/>
        </authorList>
    </citation>
    <scope>NUCLEOTIDE SEQUENCE [LARGE SCALE GENOMIC DNA]</scope>
    <source>
        <strain>ATCC 51907 / DSM 11121 / KW20 / Rd</strain>
    </source>
</reference>
<protein>
    <recommendedName>
        <fullName>Uncharacterized protein HI_1458</fullName>
    </recommendedName>
</protein>
<organism>
    <name type="scientific">Haemophilus influenzae (strain ATCC 51907 / DSM 11121 / KW20 / Rd)</name>
    <dbReference type="NCBI Taxonomy" id="71421"/>
    <lineage>
        <taxon>Bacteria</taxon>
        <taxon>Pseudomonadati</taxon>
        <taxon>Pseudomonadota</taxon>
        <taxon>Gammaproteobacteria</taxon>
        <taxon>Pasteurellales</taxon>
        <taxon>Pasteurellaceae</taxon>
        <taxon>Haemophilus</taxon>
    </lineage>
</organism>
<feature type="chain" id="PRO_0000078061" description="Uncharacterized protein HI_1458">
    <location>
        <begin position="1"/>
        <end position="80"/>
    </location>
</feature>